<feature type="chain" id="PRO_1000086024" description="Small ribosomal subunit protein uS5">
    <location>
        <begin position="1"/>
        <end position="201"/>
    </location>
</feature>
<feature type="domain" description="S5 DRBM" evidence="1">
    <location>
        <begin position="31"/>
        <end position="94"/>
    </location>
</feature>
<feature type="region of interest" description="Disordered" evidence="2">
    <location>
        <begin position="1"/>
        <end position="28"/>
    </location>
</feature>
<feature type="region of interest" description="Disordered" evidence="2">
    <location>
        <begin position="173"/>
        <end position="201"/>
    </location>
</feature>
<reference key="1">
    <citation type="submission" date="2006-08" db="EMBL/GenBank/DDBJ databases">
        <title>Complete sequence of Maricaulis maris MCS10.</title>
        <authorList>
            <consortium name="US DOE Joint Genome Institute"/>
            <person name="Copeland A."/>
            <person name="Lucas S."/>
            <person name="Lapidus A."/>
            <person name="Barry K."/>
            <person name="Detter J.C."/>
            <person name="Glavina del Rio T."/>
            <person name="Hammon N."/>
            <person name="Israni S."/>
            <person name="Dalin E."/>
            <person name="Tice H."/>
            <person name="Pitluck S."/>
            <person name="Saunders E."/>
            <person name="Brettin T."/>
            <person name="Bruce D."/>
            <person name="Han C."/>
            <person name="Tapia R."/>
            <person name="Gilna P."/>
            <person name="Schmutz J."/>
            <person name="Larimer F."/>
            <person name="Land M."/>
            <person name="Hauser L."/>
            <person name="Kyrpides N."/>
            <person name="Mikhailova N."/>
            <person name="Viollier P."/>
            <person name="Stephens C."/>
            <person name="Richardson P."/>
        </authorList>
    </citation>
    <scope>NUCLEOTIDE SEQUENCE [LARGE SCALE GENOMIC DNA]</scope>
    <source>
        <strain>MCS10</strain>
    </source>
</reference>
<proteinExistence type="inferred from homology"/>
<accession>Q0ANR7</accession>
<organism>
    <name type="scientific">Maricaulis maris (strain MCS10)</name>
    <name type="common">Caulobacter maris</name>
    <dbReference type="NCBI Taxonomy" id="394221"/>
    <lineage>
        <taxon>Bacteria</taxon>
        <taxon>Pseudomonadati</taxon>
        <taxon>Pseudomonadota</taxon>
        <taxon>Alphaproteobacteria</taxon>
        <taxon>Maricaulales</taxon>
        <taxon>Maricaulaceae</taxon>
        <taxon>Maricaulis</taxon>
    </lineage>
</organism>
<evidence type="ECO:0000255" key="1">
    <source>
        <dbReference type="HAMAP-Rule" id="MF_01307"/>
    </source>
</evidence>
<evidence type="ECO:0000256" key="2">
    <source>
        <dbReference type="SAM" id="MobiDB-lite"/>
    </source>
</evidence>
<evidence type="ECO:0000305" key="3"/>
<gene>
    <name evidence="1" type="primary">rpsE</name>
    <name type="ordered locus">Mmar10_1778</name>
</gene>
<dbReference type="EMBL" id="CP000449">
    <property type="protein sequence ID" value="ABI66070.1"/>
    <property type="molecule type" value="Genomic_DNA"/>
</dbReference>
<dbReference type="RefSeq" id="WP_011643716.1">
    <property type="nucleotide sequence ID" value="NC_008347.1"/>
</dbReference>
<dbReference type="SMR" id="Q0ANR7"/>
<dbReference type="STRING" id="394221.Mmar10_1778"/>
<dbReference type="KEGG" id="mmr:Mmar10_1778"/>
<dbReference type="eggNOG" id="COG0098">
    <property type="taxonomic scope" value="Bacteria"/>
</dbReference>
<dbReference type="HOGENOM" id="CLU_065898_2_2_5"/>
<dbReference type="OrthoDB" id="9809045at2"/>
<dbReference type="Proteomes" id="UP000001964">
    <property type="component" value="Chromosome"/>
</dbReference>
<dbReference type="GO" id="GO:0015935">
    <property type="term" value="C:small ribosomal subunit"/>
    <property type="evidence" value="ECO:0007669"/>
    <property type="project" value="InterPro"/>
</dbReference>
<dbReference type="GO" id="GO:0019843">
    <property type="term" value="F:rRNA binding"/>
    <property type="evidence" value="ECO:0007669"/>
    <property type="project" value="UniProtKB-UniRule"/>
</dbReference>
<dbReference type="GO" id="GO:0003735">
    <property type="term" value="F:structural constituent of ribosome"/>
    <property type="evidence" value="ECO:0007669"/>
    <property type="project" value="InterPro"/>
</dbReference>
<dbReference type="GO" id="GO:0006412">
    <property type="term" value="P:translation"/>
    <property type="evidence" value="ECO:0007669"/>
    <property type="project" value="UniProtKB-UniRule"/>
</dbReference>
<dbReference type="FunFam" id="3.30.160.20:FF:000001">
    <property type="entry name" value="30S ribosomal protein S5"/>
    <property type="match status" value="1"/>
</dbReference>
<dbReference type="FunFam" id="3.30.230.10:FF:000002">
    <property type="entry name" value="30S ribosomal protein S5"/>
    <property type="match status" value="1"/>
</dbReference>
<dbReference type="Gene3D" id="3.30.160.20">
    <property type="match status" value="1"/>
</dbReference>
<dbReference type="Gene3D" id="3.30.230.10">
    <property type="match status" value="1"/>
</dbReference>
<dbReference type="HAMAP" id="MF_01307_B">
    <property type="entry name" value="Ribosomal_uS5_B"/>
    <property type="match status" value="1"/>
</dbReference>
<dbReference type="InterPro" id="IPR020568">
    <property type="entry name" value="Ribosomal_Su5_D2-typ_SF"/>
</dbReference>
<dbReference type="InterPro" id="IPR000851">
    <property type="entry name" value="Ribosomal_uS5"/>
</dbReference>
<dbReference type="InterPro" id="IPR005712">
    <property type="entry name" value="Ribosomal_uS5_bac-type"/>
</dbReference>
<dbReference type="InterPro" id="IPR005324">
    <property type="entry name" value="Ribosomal_uS5_C"/>
</dbReference>
<dbReference type="InterPro" id="IPR013810">
    <property type="entry name" value="Ribosomal_uS5_N"/>
</dbReference>
<dbReference type="InterPro" id="IPR018192">
    <property type="entry name" value="Ribosomal_uS5_N_CS"/>
</dbReference>
<dbReference type="InterPro" id="IPR014721">
    <property type="entry name" value="Ribsml_uS5_D2-typ_fold_subgr"/>
</dbReference>
<dbReference type="NCBIfam" id="TIGR01021">
    <property type="entry name" value="rpsE_bact"/>
    <property type="match status" value="1"/>
</dbReference>
<dbReference type="PANTHER" id="PTHR48277">
    <property type="entry name" value="MITOCHONDRIAL RIBOSOMAL PROTEIN S5"/>
    <property type="match status" value="1"/>
</dbReference>
<dbReference type="PANTHER" id="PTHR48277:SF1">
    <property type="entry name" value="MITOCHONDRIAL RIBOSOMAL PROTEIN S5"/>
    <property type="match status" value="1"/>
</dbReference>
<dbReference type="Pfam" id="PF00333">
    <property type="entry name" value="Ribosomal_S5"/>
    <property type="match status" value="1"/>
</dbReference>
<dbReference type="Pfam" id="PF03719">
    <property type="entry name" value="Ribosomal_S5_C"/>
    <property type="match status" value="1"/>
</dbReference>
<dbReference type="SUPFAM" id="SSF54768">
    <property type="entry name" value="dsRNA-binding domain-like"/>
    <property type="match status" value="1"/>
</dbReference>
<dbReference type="SUPFAM" id="SSF54211">
    <property type="entry name" value="Ribosomal protein S5 domain 2-like"/>
    <property type="match status" value="1"/>
</dbReference>
<dbReference type="PROSITE" id="PS00585">
    <property type="entry name" value="RIBOSOMAL_S5"/>
    <property type="match status" value="1"/>
</dbReference>
<dbReference type="PROSITE" id="PS50881">
    <property type="entry name" value="S5_DSRBD"/>
    <property type="match status" value="1"/>
</dbReference>
<keyword id="KW-1185">Reference proteome</keyword>
<keyword id="KW-0687">Ribonucleoprotein</keyword>
<keyword id="KW-0689">Ribosomal protein</keyword>
<keyword id="KW-0694">RNA-binding</keyword>
<keyword id="KW-0699">rRNA-binding</keyword>
<comment type="function">
    <text evidence="1">With S4 and S12 plays an important role in translational accuracy.</text>
</comment>
<comment type="function">
    <text evidence="1">Located at the back of the 30S subunit body where it stabilizes the conformation of the head with respect to the body.</text>
</comment>
<comment type="subunit">
    <text evidence="1">Part of the 30S ribosomal subunit. Contacts proteins S4 and S8.</text>
</comment>
<comment type="domain">
    <text>The N-terminal domain interacts with the head of the 30S subunit; the C-terminal domain interacts with the body and contacts protein S4. The interaction surface between S4 and S5 is involved in control of translational fidelity.</text>
</comment>
<comment type="similarity">
    <text evidence="1">Belongs to the universal ribosomal protein uS5 family.</text>
</comment>
<protein>
    <recommendedName>
        <fullName evidence="1">Small ribosomal subunit protein uS5</fullName>
    </recommendedName>
    <alternativeName>
        <fullName evidence="3">30S ribosomal protein S5</fullName>
    </alternativeName>
</protein>
<sequence length="201" mass="21523">MAHQNEQRGGGDRGRGRGRGRDRDQERDDELVDKLVHINRVAKTVKGGRNFQFAALVVVGDTKGRVGFGQGKAREVPEAIRKATDEAKKNMIRVPLREGRTLHHDGKGRHGAGKVVLRAAPPGTGVIAGGPMRAVLETLGIQDVVAKSVGTSNPYNMIRATMDALKLQSSPRSVAAKRGLKVGDLVNRRDDGASSPEAIEA</sequence>
<name>RS5_MARMM</name>